<sequence>MKKQWIVGTALLMLMTGNAWADGEPPTENILKDQFKKQYHGILKLDAITLKNLDAKGNQATWSAEGDVSSSDDLYTWVGQLADYELLEQTWTKDKPVKFSAMLTSKGTPASGWSVNFYSFQAAASDRGRVVDDIKTNNKYLIVNSEDFNYRFSQLESALNTQKNSIPALEKEVKALDKQMVAAQKAADAYWGKDANGKQMTREDAFKKIHQQRDEFNKQNDSEAFAVKYDKEVYQPAIAACHKQSEECYEVPIQQKRDFDINEQRRQTFLQSQKLSRKLQDDWVTLEKGQYPLTMKVSEINSKKVAILMKIDDINQANERWKKDTEQLRRNGVIK</sequence>
<reference key="1">
    <citation type="journal article" date="1997" name="Science">
        <title>The complete genome sequence of Escherichia coli K-12.</title>
        <authorList>
            <person name="Blattner F.R."/>
            <person name="Plunkett G. III"/>
            <person name="Bloch C.A."/>
            <person name="Perna N.T."/>
            <person name="Burland V."/>
            <person name="Riley M."/>
            <person name="Collado-Vides J."/>
            <person name="Glasner J.D."/>
            <person name="Rode C.K."/>
            <person name="Mayhew G.F."/>
            <person name="Gregor J."/>
            <person name="Davis N.W."/>
            <person name="Kirkpatrick H.A."/>
            <person name="Goeden M.A."/>
            <person name="Rose D.J."/>
            <person name="Mau B."/>
            <person name="Shao Y."/>
        </authorList>
    </citation>
    <scope>NUCLEOTIDE SEQUENCE [LARGE SCALE GENOMIC DNA]</scope>
    <source>
        <strain>K12 / MG1655 / ATCC 47076</strain>
    </source>
</reference>
<reference key="2">
    <citation type="journal article" date="2006" name="Mol. Syst. Biol.">
        <title>Highly accurate genome sequences of Escherichia coli K-12 strains MG1655 and W3110.</title>
        <authorList>
            <person name="Hayashi K."/>
            <person name="Morooka N."/>
            <person name="Yamamoto Y."/>
            <person name="Fujita K."/>
            <person name="Isono K."/>
            <person name="Choi S."/>
            <person name="Ohtsubo E."/>
            <person name="Baba T."/>
            <person name="Wanner B.L."/>
            <person name="Mori H."/>
            <person name="Horiuchi T."/>
        </authorList>
    </citation>
    <scope>NUCLEOTIDE SEQUENCE [LARGE SCALE GENOMIC DNA]</scope>
    <source>
        <strain>K12 / W3110 / ATCC 27325 / DSM 5911</strain>
    </source>
</reference>
<reference key="3">
    <citation type="journal article" date="1990" name="Gene">
        <title>L-asparaginase II of Escherichia coli K-12: cloning, mapping and sequencing of the ansB gene.</title>
        <authorList>
            <person name="Bonthron D.T."/>
        </authorList>
    </citation>
    <scope>NUCLEOTIDE SEQUENCE [GENOMIC DNA] OF 1-45</scope>
    <source>
        <strain>K12</strain>
    </source>
</reference>
<reference key="4">
    <citation type="journal article" date="1995" name="Nucleic Acids Res.">
        <title>Detection of new genes in a bacterial genome using Markov models for three gene classes.</title>
        <authorList>
            <person name="Borodovsky M."/>
            <person name="McIninch J."/>
            <person name="Koonin E.V."/>
            <person name="Rudd K.E."/>
            <person name="Medigue C."/>
            <person name="Danchin A."/>
        </authorList>
    </citation>
    <scope>IDENTIFICATION</scope>
</reference>
<feature type="chain" id="PRO_0000169370" description="Uncharacterized protein YggM">
    <location>
        <begin position="1"/>
        <end position="335"/>
    </location>
</feature>
<dbReference type="EMBL" id="U28377">
    <property type="protein sequence ID" value="AAA69123.1"/>
    <property type="molecule type" value="Genomic_DNA"/>
</dbReference>
<dbReference type="EMBL" id="U00096">
    <property type="protein sequence ID" value="AAC75993.1"/>
    <property type="molecule type" value="Genomic_DNA"/>
</dbReference>
<dbReference type="EMBL" id="AP009048">
    <property type="protein sequence ID" value="BAE77019.1"/>
    <property type="molecule type" value="Genomic_DNA"/>
</dbReference>
<dbReference type="EMBL" id="M34234">
    <property type="status" value="NOT_ANNOTATED_CDS"/>
    <property type="molecule type" value="Genomic_DNA"/>
</dbReference>
<dbReference type="PIR" id="C65081">
    <property type="entry name" value="C65081"/>
</dbReference>
<dbReference type="RefSeq" id="NP_417431.1">
    <property type="nucleotide sequence ID" value="NC_000913.3"/>
</dbReference>
<dbReference type="RefSeq" id="WP_000745210.1">
    <property type="nucleotide sequence ID" value="NZ_LN832404.1"/>
</dbReference>
<dbReference type="SMR" id="P46142"/>
<dbReference type="BioGRID" id="4261284">
    <property type="interactions" value="17"/>
</dbReference>
<dbReference type="FunCoup" id="P46142">
    <property type="interactions" value="145"/>
</dbReference>
<dbReference type="IntAct" id="P46142">
    <property type="interactions" value="2"/>
</dbReference>
<dbReference type="STRING" id="511145.b2956"/>
<dbReference type="PaxDb" id="511145-b2956"/>
<dbReference type="EnsemblBacteria" id="AAC75993">
    <property type="protein sequence ID" value="AAC75993"/>
    <property type="gene ID" value="b2956"/>
</dbReference>
<dbReference type="GeneID" id="947455"/>
<dbReference type="KEGG" id="ecj:JW2923"/>
<dbReference type="KEGG" id="eco:b2956"/>
<dbReference type="KEGG" id="ecoc:C3026_16175"/>
<dbReference type="PATRIC" id="fig|511145.12.peg.3050"/>
<dbReference type="EchoBASE" id="EB2566"/>
<dbReference type="eggNOG" id="ENOG502Z9G0">
    <property type="taxonomic scope" value="Bacteria"/>
</dbReference>
<dbReference type="HOGENOM" id="CLU_074320_0_0_6"/>
<dbReference type="InParanoid" id="P46142"/>
<dbReference type="OMA" id="FFSMQTA"/>
<dbReference type="OrthoDB" id="6622571at2"/>
<dbReference type="PhylomeDB" id="P46142"/>
<dbReference type="BioCyc" id="EcoCyc:EG12704-MONOMER"/>
<dbReference type="PRO" id="PR:P46142"/>
<dbReference type="Proteomes" id="UP000000625">
    <property type="component" value="Chromosome"/>
</dbReference>
<dbReference type="InterPro" id="IPR009592">
    <property type="entry name" value="DUF1202"/>
</dbReference>
<dbReference type="Pfam" id="PF06717">
    <property type="entry name" value="DUF1202"/>
    <property type="match status" value="1"/>
</dbReference>
<name>YGGM_ECOLI</name>
<organism>
    <name type="scientific">Escherichia coli (strain K12)</name>
    <dbReference type="NCBI Taxonomy" id="83333"/>
    <lineage>
        <taxon>Bacteria</taxon>
        <taxon>Pseudomonadati</taxon>
        <taxon>Pseudomonadota</taxon>
        <taxon>Gammaproteobacteria</taxon>
        <taxon>Enterobacterales</taxon>
        <taxon>Enterobacteriaceae</taxon>
        <taxon>Escherichia</taxon>
    </lineage>
</organism>
<protein>
    <recommendedName>
        <fullName>Uncharacterized protein YggM</fullName>
    </recommendedName>
</protein>
<proteinExistence type="predicted"/>
<keyword id="KW-1185">Reference proteome</keyword>
<accession>P46142</accession>
<accession>Q2M9N7</accession>
<gene>
    <name type="primary">yggM</name>
    <name type="ordered locus">b2956</name>
    <name type="ordered locus">JW2923</name>
</gene>